<comment type="function">
    <text evidence="1">Catalyzes the phosphorylation of the 3'-hydroxyl group of dephosphocoenzyme A to form coenzyme A.</text>
</comment>
<comment type="catalytic activity">
    <reaction evidence="1">
        <text>3'-dephospho-CoA + ATP = ADP + CoA + H(+)</text>
        <dbReference type="Rhea" id="RHEA:18245"/>
        <dbReference type="ChEBI" id="CHEBI:15378"/>
        <dbReference type="ChEBI" id="CHEBI:30616"/>
        <dbReference type="ChEBI" id="CHEBI:57287"/>
        <dbReference type="ChEBI" id="CHEBI:57328"/>
        <dbReference type="ChEBI" id="CHEBI:456216"/>
        <dbReference type="EC" id="2.7.1.24"/>
    </reaction>
</comment>
<comment type="pathway">
    <text evidence="1">Cofactor biosynthesis; coenzyme A biosynthesis; CoA from (R)-pantothenate: step 5/5.</text>
</comment>
<comment type="subcellular location">
    <subcellularLocation>
        <location evidence="1">Cytoplasm</location>
    </subcellularLocation>
</comment>
<comment type="similarity">
    <text evidence="1">Belongs to the CoaE family.</text>
</comment>
<accession>Q57TB6</accession>
<name>COAE_SALCH</name>
<dbReference type="EC" id="2.7.1.24" evidence="1"/>
<dbReference type="EMBL" id="AE017220">
    <property type="protein sequence ID" value="AAX64045.1"/>
    <property type="molecule type" value="Genomic_DNA"/>
</dbReference>
<dbReference type="RefSeq" id="WP_011264188.1">
    <property type="nucleotide sequence ID" value="NC_006905.1"/>
</dbReference>
<dbReference type="SMR" id="Q57TB6"/>
<dbReference type="KEGG" id="sec:SCH_0139"/>
<dbReference type="HOGENOM" id="CLU_057180_1_2_6"/>
<dbReference type="UniPathway" id="UPA00241">
    <property type="reaction ID" value="UER00356"/>
</dbReference>
<dbReference type="Proteomes" id="UP000000538">
    <property type="component" value="Chromosome"/>
</dbReference>
<dbReference type="GO" id="GO:0005737">
    <property type="term" value="C:cytoplasm"/>
    <property type="evidence" value="ECO:0007669"/>
    <property type="project" value="UniProtKB-SubCell"/>
</dbReference>
<dbReference type="GO" id="GO:0005524">
    <property type="term" value="F:ATP binding"/>
    <property type="evidence" value="ECO:0007669"/>
    <property type="project" value="UniProtKB-UniRule"/>
</dbReference>
<dbReference type="GO" id="GO:0004140">
    <property type="term" value="F:dephospho-CoA kinase activity"/>
    <property type="evidence" value="ECO:0007669"/>
    <property type="project" value="UniProtKB-UniRule"/>
</dbReference>
<dbReference type="GO" id="GO:0015937">
    <property type="term" value="P:coenzyme A biosynthetic process"/>
    <property type="evidence" value="ECO:0007669"/>
    <property type="project" value="UniProtKB-UniRule"/>
</dbReference>
<dbReference type="CDD" id="cd02022">
    <property type="entry name" value="DPCK"/>
    <property type="match status" value="1"/>
</dbReference>
<dbReference type="FunFam" id="3.40.50.300:FF:000518">
    <property type="entry name" value="Dephospho-CoA kinase"/>
    <property type="match status" value="1"/>
</dbReference>
<dbReference type="Gene3D" id="3.40.50.300">
    <property type="entry name" value="P-loop containing nucleotide triphosphate hydrolases"/>
    <property type="match status" value="1"/>
</dbReference>
<dbReference type="HAMAP" id="MF_00376">
    <property type="entry name" value="Dephospho_CoA_kinase"/>
    <property type="match status" value="1"/>
</dbReference>
<dbReference type="InterPro" id="IPR001977">
    <property type="entry name" value="Depp_CoAkinase"/>
</dbReference>
<dbReference type="InterPro" id="IPR027417">
    <property type="entry name" value="P-loop_NTPase"/>
</dbReference>
<dbReference type="NCBIfam" id="TIGR00152">
    <property type="entry name" value="dephospho-CoA kinase"/>
    <property type="match status" value="1"/>
</dbReference>
<dbReference type="PANTHER" id="PTHR10695:SF46">
    <property type="entry name" value="BIFUNCTIONAL COENZYME A SYNTHASE-RELATED"/>
    <property type="match status" value="1"/>
</dbReference>
<dbReference type="PANTHER" id="PTHR10695">
    <property type="entry name" value="DEPHOSPHO-COA KINASE-RELATED"/>
    <property type="match status" value="1"/>
</dbReference>
<dbReference type="Pfam" id="PF01121">
    <property type="entry name" value="CoaE"/>
    <property type="match status" value="1"/>
</dbReference>
<dbReference type="SUPFAM" id="SSF52540">
    <property type="entry name" value="P-loop containing nucleoside triphosphate hydrolases"/>
    <property type="match status" value="1"/>
</dbReference>
<dbReference type="PROSITE" id="PS51219">
    <property type="entry name" value="DPCK"/>
    <property type="match status" value="1"/>
</dbReference>
<protein>
    <recommendedName>
        <fullName evidence="1">Dephospho-CoA kinase</fullName>
        <ecNumber evidence="1">2.7.1.24</ecNumber>
    </recommendedName>
    <alternativeName>
        <fullName evidence="1">Dephosphocoenzyme A kinase</fullName>
    </alternativeName>
</protein>
<feature type="chain" id="PRO_0000243337" description="Dephospho-CoA kinase">
    <location>
        <begin position="1"/>
        <end position="206"/>
    </location>
</feature>
<feature type="domain" description="DPCK" evidence="1">
    <location>
        <begin position="4"/>
        <end position="200"/>
    </location>
</feature>
<feature type="binding site" evidence="1">
    <location>
        <begin position="12"/>
        <end position="17"/>
    </location>
    <ligand>
        <name>ATP</name>
        <dbReference type="ChEBI" id="CHEBI:30616"/>
    </ligand>
</feature>
<gene>
    <name evidence="1" type="primary">coaE</name>
    <name type="ordered locus">SCH_0139</name>
</gene>
<evidence type="ECO:0000255" key="1">
    <source>
        <dbReference type="HAMAP-Rule" id="MF_00376"/>
    </source>
</evidence>
<reference key="1">
    <citation type="journal article" date="2005" name="Nucleic Acids Res.">
        <title>The genome sequence of Salmonella enterica serovar Choleraesuis, a highly invasive and resistant zoonotic pathogen.</title>
        <authorList>
            <person name="Chiu C.-H."/>
            <person name="Tang P."/>
            <person name="Chu C."/>
            <person name="Hu S."/>
            <person name="Bao Q."/>
            <person name="Yu J."/>
            <person name="Chou Y.-Y."/>
            <person name="Wang H.-S."/>
            <person name="Lee Y.-S."/>
        </authorList>
    </citation>
    <scope>NUCLEOTIDE SEQUENCE [LARGE SCALE GENOMIC DNA]</scope>
    <source>
        <strain>SC-B67</strain>
    </source>
</reference>
<proteinExistence type="inferred from homology"/>
<organism>
    <name type="scientific">Salmonella choleraesuis (strain SC-B67)</name>
    <dbReference type="NCBI Taxonomy" id="321314"/>
    <lineage>
        <taxon>Bacteria</taxon>
        <taxon>Pseudomonadati</taxon>
        <taxon>Pseudomonadota</taxon>
        <taxon>Gammaproteobacteria</taxon>
        <taxon>Enterobacterales</taxon>
        <taxon>Enterobacteriaceae</taxon>
        <taxon>Salmonella</taxon>
    </lineage>
</organism>
<keyword id="KW-0067">ATP-binding</keyword>
<keyword id="KW-0173">Coenzyme A biosynthesis</keyword>
<keyword id="KW-0963">Cytoplasm</keyword>
<keyword id="KW-0418">Kinase</keyword>
<keyword id="KW-0547">Nucleotide-binding</keyword>
<keyword id="KW-0808">Transferase</keyword>
<sequence>MRYTVALTGGIGSGKSTVSDAFADLGITVIDADIIARQMVEPGQPTLNAIAEHFGSELIAADGTLRRRALRERIFSHPEEKAWLNALLHPLIQQETQRQFQQATSPYVLWVVPLLVENRLYQKANRVLVVDVTPETQLIRTMQRDDVTREHVEHILAAQATREARLAVADDVIDNNGAPDAIASDVARLHASYLKLASQFVSQEKP</sequence>